<sequence>MKQLLASPSLQLVTYPASATAQSAEFASADCVTGLNEIGQISVSNISGDPQDVERIVALKADEQGASWYRIITMYEDQQPDNWRVQAILYA</sequence>
<name>YJFN_SHIFL</name>
<keyword id="KW-0574">Periplasm</keyword>
<keyword id="KW-1185">Reference proteome</keyword>
<keyword id="KW-0732">Signal</keyword>
<reference key="1">
    <citation type="journal article" date="2002" name="Nucleic Acids Res.">
        <title>Genome sequence of Shigella flexneri 2a: insights into pathogenicity through comparison with genomes of Escherichia coli K12 and O157.</title>
        <authorList>
            <person name="Jin Q."/>
            <person name="Yuan Z."/>
            <person name="Xu J."/>
            <person name="Wang Y."/>
            <person name="Shen Y."/>
            <person name="Lu W."/>
            <person name="Wang J."/>
            <person name="Liu H."/>
            <person name="Yang J."/>
            <person name="Yang F."/>
            <person name="Zhang X."/>
            <person name="Zhang J."/>
            <person name="Yang G."/>
            <person name="Wu H."/>
            <person name="Qu D."/>
            <person name="Dong J."/>
            <person name="Sun L."/>
            <person name="Xue Y."/>
            <person name="Zhao A."/>
            <person name="Gao Y."/>
            <person name="Zhu J."/>
            <person name="Kan B."/>
            <person name="Ding K."/>
            <person name="Chen S."/>
            <person name="Cheng H."/>
            <person name="Yao Z."/>
            <person name="He B."/>
            <person name="Chen R."/>
            <person name="Ma D."/>
            <person name="Qiang B."/>
            <person name="Wen Y."/>
            <person name="Hou Y."/>
            <person name="Yu J."/>
        </authorList>
    </citation>
    <scope>NUCLEOTIDE SEQUENCE [LARGE SCALE GENOMIC DNA]</scope>
    <source>
        <strain>301 / Serotype 2a</strain>
    </source>
</reference>
<reference key="2">
    <citation type="journal article" date="2003" name="Infect. Immun.">
        <title>Complete genome sequence and comparative genomics of Shigella flexneri serotype 2a strain 2457T.</title>
        <authorList>
            <person name="Wei J."/>
            <person name="Goldberg M.B."/>
            <person name="Burland V."/>
            <person name="Venkatesan M.M."/>
            <person name="Deng W."/>
            <person name="Fournier G."/>
            <person name="Mayhew G.F."/>
            <person name="Plunkett G. III"/>
            <person name="Rose D.J."/>
            <person name="Darling A."/>
            <person name="Mau B."/>
            <person name="Perna N.T."/>
            <person name="Payne S.M."/>
            <person name="Runyen-Janecky L.J."/>
            <person name="Zhou S."/>
            <person name="Schwartz D.C."/>
            <person name="Blattner F.R."/>
        </authorList>
    </citation>
    <scope>NUCLEOTIDE SEQUENCE [LARGE SCALE GENOMIC DNA]</scope>
    <source>
        <strain>ATCC 700930 / 2457T / Serotype 2a</strain>
    </source>
</reference>
<protein>
    <recommendedName>
        <fullName>Uncharacterized protein YjfN</fullName>
    </recommendedName>
</protein>
<evidence type="ECO:0000255" key="1"/>
<evidence type="ECO:0000305" key="2"/>
<gene>
    <name type="primary">yjfN</name>
    <name type="ordered locus">SF4343</name>
    <name type="ordered locus">S4613</name>
</gene>
<comment type="subcellular location">
    <subcellularLocation>
        <location evidence="2">Periplasm</location>
    </subcellularLocation>
</comment>
<comment type="similarity">
    <text evidence="2">Belongs to the BhsA/McbA family.</text>
</comment>
<comment type="sequence caution" evidence="2">
    <conflict type="erroneous initiation">
        <sequence resource="EMBL-CDS" id="AAN45760"/>
    </conflict>
    <text>Extended N-terminus.</text>
</comment>
<comment type="sequence caution" evidence="2">
    <conflict type="erroneous initiation">
        <sequence resource="EMBL-CDS" id="AAP19542"/>
    </conflict>
    <text>Extended N-terminus.</text>
</comment>
<accession>P0AF85</accession>
<accession>P39296</accession>
<feature type="signal peptide" evidence="1">
    <location>
        <begin position="1"/>
        <end position="21"/>
    </location>
</feature>
<feature type="chain" id="PRO_0000169756" description="Uncharacterized protein YjfN">
    <location>
        <begin position="22"/>
        <end position="91"/>
    </location>
</feature>
<dbReference type="EMBL" id="AE005674">
    <property type="protein sequence ID" value="AAN45760.2"/>
    <property type="status" value="ALT_INIT"/>
    <property type="molecule type" value="Genomic_DNA"/>
</dbReference>
<dbReference type="EMBL" id="AE014073">
    <property type="protein sequence ID" value="AAP19542.1"/>
    <property type="status" value="ALT_INIT"/>
    <property type="molecule type" value="Genomic_DNA"/>
</dbReference>
<dbReference type="RefSeq" id="NP_710053.2">
    <property type="nucleotide sequence ID" value="NC_004337.2"/>
</dbReference>
<dbReference type="RefSeq" id="WP_000811566.1">
    <property type="nucleotide sequence ID" value="NZ_WPGW01000113.1"/>
</dbReference>
<dbReference type="SMR" id="P0AF85"/>
<dbReference type="PaxDb" id="198214-SF4343"/>
<dbReference type="GeneID" id="1025462"/>
<dbReference type="GeneID" id="93777636"/>
<dbReference type="KEGG" id="sfl:SF4343"/>
<dbReference type="KEGG" id="sfx:S4613"/>
<dbReference type="PATRIC" id="fig|198214.7.peg.5122"/>
<dbReference type="HOGENOM" id="CLU_158602_3_0_6"/>
<dbReference type="Proteomes" id="UP000001006">
    <property type="component" value="Chromosome"/>
</dbReference>
<dbReference type="Proteomes" id="UP000002673">
    <property type="component" value="Chromosome"/>
</dbReference>
<dbReference type="GO" id="GO:0042597">
    <property type="term" value="C:periplasmic space"/>
    <property type="evidence" value="ECO:0007669"/>
    <property type="project" value="UniProtKB-SubCell"/>
</dbReference>
<dbReference type="Gene3D" id="3.30.1660.10">
    <property type="entry name" value="Flavin-binding protein dodecin"/>
    <property type="match status" value="1"/>
</dbReference>
<dbReference type="InterPro" id="IPR051096">
    <property type="entry name" value="BhsA/McbA_stress_biofilm_assoc"/>
</dbReference>
<dbReference type="InterPro" id="IPR025543">
    <property type="entry name" value="Dodecin-like"/>
</dbReference>
<dbReference type="InterPro" id="IPR036275">
    <property type="entry name" value="YdgH-like_sf"/>
</dbReference>
<dbReference type="InterPro" id="IPR010854">
    <property type="entry name" value="YdgH/BhsA/McbA-like_dom"/>
</dbReference>
<dbReference type="PANTHER" id="PTHR34156:SF4">
    <property type="entry name" value="INNER MEMBRANE PROTEIN"/>
    <property type="match status" value="1"/>
</dbReference>
<dbReference type="PANTHER" id="PTHR34156">
    <property type="entry name" value="OUTER MEMBRANE PROTEIN-RELATED-RELATED"/>
    <property type="match status" value="1"/>
</dbReference>
<dbReference type="Pfam" id="PF07338">
    <property type="entry name" value="YdgH_BhsA-like"/>
    <property type="match status" value="1"/>
</dbReference>
<dbReference type="SUPFAM" id="SSF159871">
    <property type="entry name" value="YdgH-like"/>
    <property type="match status" value="1"/>
</dbReference>
<proteinExistence type="inferred from homology"/>
<organism>
    <name type="scientific">Shigella flexneri</name>
    <dbReference type="NCBI Taxonomy" id="623"/>
    <lineage>
        <taxon>Bacteria</taxon>
        <taxon>Pseudomonadati</taxon>
        <taxon>Pseudomonadota</taxon>
        <taxon>Gammaproteobacteria</taxon>
        <taxon>Enterobacterales</taxon>
        <taxon>Enterobacteriaceae</taxon>
        <taxon>Shigella</taxon>
    </lineage>
</organism>